<protein>
    <recommendedName>
        <fullName evidence="1">Glutamyl-tRNA(Gln) amidotransferase subunit D</fullName>
        <shortName evidence="1">Glu-ADT subunit D</shortName>
        <ecNumber evidence="1">6.3.5.-</ecNumber>
    </recommendedName>
</protein>
<proteinExistence type="inferred from homology"/>
<organism>
    <name type="scientific">Pyrobaculum aerophilum (strain ATCC 51768 / DSM 7523 / JCM 9630 / CIP 104966 / NBRC 100827 / IM2)</name>
    <dbReference type="NCBI Taxonomy" id="178306"/>
    <lineage>
        <taxon>Archaea</taxon>
        <taxon>Thermoproteota</taxon>
        <taxon>Thermoprotei</taxon>
        <taxon>Thermoproteales</taxon>
        <taxon>Thermoproteaceae</taxon>
        <taxon>Pyrobaculum</taxon>
    </lineage>
</organism>
<dbReference type="EC" id="6.3.5.-" evidence="1"/>
<dbReference type="EMBL" id="AE009441">
    <property type="protein sequence ID" value="AAL63192.1"/>
    <property type="molecule type" value="Genomic_DNA"/>
</dbReference>
<dbReference type="RefSeq" id="WP_011007664.1">
    <property type="nucleotide sequence ID" value="NC_003364.1"/>
</dbReference>
<dbReference type="SMR" id="Q8ZY04"/>
<dbReference type="FunCoup" id="Q8ZY04">
    <property type="interactions" value="57"/>
</dbReference>
<dbReference type="STRING" id="178306.PAE1003"/>
<dbReference type="EnsemblBacteria" id="AAL63192">
    <property type="protein sequence ID" value="AAL63192"/>
    <property type="gene ID" value="PAE1003"/>
</dbReference>
<dbReference type="GeneID" id="1465427"/>
<dbReference type="KEGG" id="pai:PAE1003"/>
<dbReference type="PATRIC" id="fig|178306.9.peg.747"/>
<dbReference type="eggNOG" id="arCOG01924">
    <property type="taxonomic scope" value="Archaea"/>
</dbReference>
<dbReference type="HOGENOM" id="CLU_019134_2_1_2"/>
<dbReference type="InParanoid" id="Q8ZY04"/>
<dbReference type="Proteomes" id="UP000002439">
    <property type="component" value="Chromosome"/>
</dbReference>
<dbReference type="GO" id="GO:0004067">
    <property type="term" value="F:asparaginase activity"/>
    <property type="evidence" value="ECO:0007669"/>
    <property type="project" value="InterPro"/>
</dbReference>
<dbReference type="GO" id="GO:0005524">
    <property type="term" value="F:ATP binding"/>
    <property type="evidence" value="ECO:0007669"/>
    <property type="project" value="UniProtKB-KW"/>
</dbReference>
<dbReference type="GO" id="GO:0050567">
    <property type="term" value="F:glutaminyl-tRNA synthase (glutamine-hydrolyzing) activity"/>
    <property type="evidence" value="ECO:0007669"/>
    <property type="project" value="UniProtKB-UniRule"/>
</dbReference>
<dbReference type="GO" id="GO:0006520">
    <property type="term" value="P:amino acid metabolic process"/>
    <property type="evidence" value="ECO:0007669"/>
    <property type="project" value="InterPro"/>
</dbReference>
<dbReference type="GO" id="GO:0006450">
    <property type="term" value="P:regulation of translational fidelity"/>
    <property type="evidence" value="ECO:0007669"/>
    <property type="project" value="InterPro"/>
</dbReference>
<dbReference type="GO" id="GO:0006412">
    <property type="term" value="P:translation"/>
    <property type="evidence" value="ECO:0007669"/>
    <property type="project" value="UniProtKB-UniRule"/>
</dbReference>
<dbReference type="CDD" id="cd08962">
    <property type="entry name" value="GatD"/>
    <property type="match status" value="1"/>
</dbReference>
<dbReference type="Gene3D" id="2.30.30.520">
    <property type="match status" value="1"/>
</dbReference>
<dbReference type="Gene3D" id="3.40.50.40">
    <property type="match status" value="1"/>
</dbReference>
<dbReference type="Gene3D" id="3.40.50.1170">
    <property type="entry name" value="L-asparaginase, N-terminal domain"/>
    <property type="match status" value="1"/>
</dbReference>
<dbReference type="HAMAP" id="MF_00586">
    <property type="entry name" value="GatD"/>
    <property type="match status" value="1"/>
</dbReference>
<dbReference type="InterPro" id="IPR006033">
    <property type="entry name" value="AsnA_fam"/>
</dbReference>
<dbReference type="InterPro" id="IPR036152">
    <property type="entry name" value="Asp/glu_Ase-like_sf"/>
</dbReference>
<dbReference type="InterPro" id="IPR006034">
    <property type="entry name" value="Asparaginase/glutaminase-like"/>
</dbReference>
<dbReference type="InterPro" id="IPR027475">
    <property type="entry name" value="Asparaginase/glutaminase_AS2"/>
</dbReference>
<dbReference type="InterPro" id="IPR040919">
    <property type="entry name" value="Asparaginase_C"/>
</dbReference>
<dbReference type="InterPro" id="IPR011878">
    <property type="entry name" value="GatD"/>
</dbReference>
<dbReference type="InterPro" id="IPR040918">
    <property type="entry name" value="GatD_N"/>
</dbReference>
<dbReference type="InterPro" id="IPR037222">
    <property type="entry name" value="GatD_N_sf"/>
</dbReference>
<dbReference type="InterPro" id="IPR027473">
    <property type="entry name" value="L-asparaginase_C"/>
</dbReference>
<dbReference type="InterPro" id="IPR027474">
    <property type="entry name" value="L-asparaginase_N"/>
</dbReference>
<dbReference type="InterPro" id="IPR037152">
    <property type="entry name" value="L-asparaginase_N_sf"/>
</dbReference>
<dbReference type="NCBIfam" id="TIGR00519">
    <property type="entry name" value="asnASE_I"/>
    <property type="match status" value="1"/>
</dbReference>
<dbReference type="NCBIfam" id="TIGR02153">
    <property type="entry name" value="gatD_arch"/>
    <property type="match status" value="1"/>
</dbReference>
<dbReference type="NCBIfam" id="NF003217">
    <property type="entry name" value="PRK04183.1"/>
    <property type="match status" value="1"/>
</dbReference>
<dbReference type="PANTHER" id="PTHR11707:SF28">
    <property type="entry name" value="60 KDA LYSOPHOSPHOLIPASE"/>
    <property type="match status" value="1"/>
</dbReference>
<dbReference type="PANTHER" id="PTHR11707">
    <property type="entry name" value="L-ASPARAGINASE"/>
    <property type="match status" value="1"/>
</dbReference>
<dbReference type="Pfam" id="PF00710">
    <property type="entry name" value="Asparaginase"/>
    <property type="match status" value="1"/>
</dbReference>
<dbReference type="Pfam" id="PF17763">
    <property type="entry name" value="Asparaginase_C"/>
    <property type="match status" value="1"/>
</dbReference>
<dbReference type="Pfam" id="PF18195">
    <property type="entry name" value="GatD_N"/>
    <property type="match status" value="1"/>
</dbReference>
<dbReference type="PIRSF" id="PIRSF500175">
    <property type="entry name" value="Glu_ADT_D"/>
    <property type="match status" value="1"/>
</dbReference>
<dbReference type="PIRSF" id="PIRSF001220">
    <property type="entry name" value="L-ASNase_gatD"/>
    <property type="match status" value="1"/>
</dbReference>
<dbReference type="PRINTS" id="PR00139">
    <property type="entry name" value="ASNGLNASE"/>
</dbReference>
<dbReference type="SMART" id="SM00870">
    <property type="entry name" value="Asparaginase"/>
    <property type="match status" value="1"/>
</dbReference>
<dbReference type="SUPFAM" id="SSF141300">
    <property type="entry name" value="GatD N-terminal domain-like"/>
    <property type="match status" value="1"/>
</dbReference>
<dbReference type="SUPFAM" id="SSF53774">
    <property type="entry name" value="Glutaminase/Asparaginase"/>
    <property type="match status" value="1"/>
</dbReference>
<dbReference type="PROSITE" id="PS00917">
    <property type="entry name" value="ASN_GLN_ASE_2"/>
    <property type="match status" value="1"/>
</dbReference>
<dbReference type="PROSITE" id="PS51732">
    <property type="entry name" value="ASN_GLN_ASE_3"/>
    <property type="match status" value="1"/>
</dbReference>
<sequence>MYKKVRVVLENGDVFEGVMLPPTQFSDSDIVVLKLKNGYNVGFKKGRIKEIVELGEVQTAPLSAKPMPKIEGEKVWLLATGGTILSRVDYVTGGVYPTLSVDYLFEVLGGLEAPIEAEEVTAKFSEDMTPALWGVIAERVAEAFKKGARGVVVLHGTDTMQYTAAALAFAFKSAPGPIALVGAQRSSDRPSTDAVLNLKAAIAVTARAPFAESVVVMHKTSGDTVVAVHRGTRVRKMHTSRRDTFQSINTTPIAEYYPEKELLQVLTDVYKERGGLDYTAKFEEAVALVKFYPGMHPRLLEALLEVGMKGVVIEGTGFGHVGEGVLPAVKKLIDAGVIVAMTSQTLYGRVNLYVYRRGRELLSMGVIPLEDMLPETAYAKMSWALANFKREEVPRVLTTPIAYEMSPRSDPLVFGGL</sequence>
<reference key="1">
    <citation type="journal article" date="2002" name="Proc. Natl. Acad. Sci. U.S.A.">
        <title>Genome sequence of the hyperthermophilic crenarchaeon Pyrobaculum aerophilum.</title>
        <authorList>
            <person name="Fitz-Gibbon S.T."/>
            <person name="Ladner H."/>
            <person name="Kim U.-J."/>
            <person name="Stetter K.O."/>
            <person name="Simon M.I."/>
            <person name="Miller J.H."/>
        </authorList>
    </citation>
    <scope>NUCLEOTIDE SEQUENCE [LARGE SCALE GENOMIC DNA]</scope>
    <source>
        <strain>ATCC 51768 / DSM 7523 / JCM 9630 / CIP 104966 / NBRC 100827 / IM2</strain>
    </source>
</reference>
<accession>Q8ZY04</accession>
<comment type="function">
    <text evidence="1">Allows the formation of correctly charged Gln-tRNA(Gln) through the transamidation of misacylated Glu-tRNA(Gln) in organisms which lack glutaminyl-tRNA synthetase. The reaction takes place in the presence of glutamine and ATP through an activated gamma-phospho-Glu-tRNA(Gln). The GatDE system is specific for glutamate and does not act on aspartate.</text>
</comment>
<comment type="catalytic activity">
    <reaction evidence="1">
        <text>L-glutamyl-tRNA(Gln) + L-glutamine + ATP + H2O = L-glutaminyl-tRNA(Gln) + L-glutamate + ADP + phosphate + H(+)</text>
        <dbReference type="Rhea" id="RHEA:17521"/>
        <dbReference type="Rhea" id="RHEA-COMP:9681"/>
        <dbReference type="Rhea" id="RHEA-COMP:9684"/>
        <dbReference type="ChEBI" id="CHEBI:15377"/>
        <dbReference type="ChEBI" id="CHEBI:15378"/>
        <dbReference type="ChEBI" id="CHEBI:29985"/>
        <dbReference type="ChEBI" id="CHEBI:30616"/>
        <dbReference type="ChEBI" id="CHEBI:43474"/>
        <dbReference type="ChEBI" id="CHEBI:58359"/>
        <dbReference type="ChEBI" id="CHEBI:78520"/>
        <dbReference type="ChEBI" id="CHEBI:78521"/>
        <dbReference type="ChEBI" id="CHEBI:456216"/>
    </reaction>
</comment>
<comment type="subunit">
    <text evidence="1">Heterodimer of GatD and GatE.</text>
</comment>
<comment type="similarity">
    <text evidence="1">Belongs to the asparaginase 1 family. GatD subfamily.</text>
</comment>
<keyword id="KW-0067">ATP-binding</keyword>
<keyword id="KW-0436">Ligase</keyword>
<keyword id="KW-0547">Nucleotide-binding</keyword>
<keyword id="KW-0648">Protein biosynthesis</keyword>
<keyword id="KW-1185">Reference proteome</keyword>
<evidence type="ECO:0000255" key="1">
    <source>
        <dbReference type="HAMAP-Rule" id="MF_00586"/>
    </source>
</evidence>
<evidence type="ECO:0000255" key="2">
    <source>
        <dbReference type="PROSITE-ProRule" id="PRU01068"/>
    </source>
</evidence>
<name>GATD_PYRAE</name>
<feature type="chain" id="PRO_0000140059" description="Glutamyl-tRNA(Gln) amidotransferase subunit D">
    <location>
        <begin position="1"/>
        <end position="417"/>
    </location>
</feature>
<feature type="domain" description="Asparaginase/glutaminase" evidence="2">
    <location>
        <begin position="73"/>
        <end position="400"/>
    </location>
</feature>
<feature type="active site" evidence="1">
    <location>
        <position position="83"/>
    </location>
</feature>
<feature type="active site" evidence="1">
    <location>
        <position position="157"/>
    </location>
</feature>
<feature type="active site" evidence="1">
    <location>
        <position position="158"/>
    </location>
</feature>
<feature type="active site" evidence="1">
    <location>
        <position position="236"/>
    </location>
</feature>
<gene>
    <name evidence="1" type="primary">gatD</name>
    <name type="ordered locus">PAE1003</name>
</gene>